<reference key="1">
    <citation type="journal article" date="2004" name="Nature">
        <title>Genome evolution in yeasts.</title>
        <authorList>
            <person name="Dujon B."/>
            <person name="Sherman D."/>
            <person name="Fischer G."/>
            <person name="Durrens P."/>
            <person name="Casaregola S."/>
            <person name="Lafontaine I."/>
            <person name="de Montigny J."/>
            <person name="Marck C."/>
            <person name="Neuveglise C."/>
            <person name="Talla E."/>
            <person name="Goffard N."/>
            <person name="Frangeul L."/>
            <person name="Aigle M."/>
            <person name="Anthouard V."/>
            <person name="Babour A."/>
            <person name="Barbe V."/>
            <person name="Barnay S."/>
            <person name="Blanchin S."/>
            <person name="Beckerich J.-M."/>
            <person name="Beyne E."/>
            <person name="Bleykasten C."/>
            <person name="Boisrame A."/>
            <person name="Boyer J."/>
            <person name="Cattolico L."/>
            <person name="Confanioleri F."/>
            <person name="de Daruvar A."/>
            <person name="Despons L."/>
            <person name="Fabre E."/>
            <person name="Fairhead C."/>
            <person name="Ferry-Dumazet H."/>
            <person name="Groppi A."/>
            <person name="Hantraye F."/>
            <person name="Hennequin C."/>
            <person name="Jauniaux N."/>
            <person name="Joyet P."/>
            <person name="Kachouri R."/>
            <person name="Kerrest A."/>
            <person name="Koszul R."/>
            <person name="Lemaire M."/>
            <person name="Lesur I."/>
            <person name="Ma L."/>
            <person name="Muller H."/>
            <person name="Nicaud J.-M."/>
            <person name="Nikolski M."/>
            <person name="Oztas S."/>
            <person name="Ozier-Kalogeropoulos O."/>
            <person name="Pellenz S."/>
            <person name="Potier S."/>
            <person name="Richard G.-F."/>
            <person name="Straub M.-L."/>
            <person name="Suleau A."/>
            <person name="Swennen D."/>
            <person name="Tekaia F."/>
            <person name="Wesolowski-Louvel M."/>
            <person name="Westhof E."/>
            <person name="Wirth B."/>
            <person name="Zeniou-Meyer M."/>
            <person name="Zivanovic Y."/>
            <person name="Bolotin-Fukuhara M."/>
            <person name="Thierry A."/>
            <person name="Bouchier C."/>
            <person name="Caudron B."/>
            <person name="Scarpelli C."/>
            <person name="Gaillardin C."/>
            <person name="Weissenbach J."/>
            <person name="Wincker P."/>
            <person name="Souciet J.-L."/>
        </authorList>
    </citation>
    <scope>NUCLEOTIDE SEQUENCE [LARGE SCALE GENOMIC DNA]</scope>
    <source>
        <strain>ATCC 8585 / CBS 2359 / DSM 70799 / NBRC 1267 / NRRL Y-1140 / WM37</strain>
    </source>
</reference>
<keyword id="KW-0444">Lipid biosynthesis</keyword>
<keyword id="KW-0443">Lipid metabolism</keyword>
<keyword id="KW-0521">NADP</keyword>
<keyword id="KW-0560">Oxidoreductase</keyword>
<keyword id="KW-1185">Reference proteome</keyword>
<keyword id="KW-0752">Steroid biosynthesis</keyword>
<feature type="chain" id="PRO_0000054593" description="3-keto-steroid reductase">
    <location>
        <begin position="1"/>
        <end position="346"/>
    </location>
</feature>
<feature type="active site" description="Proton donor" evidence="3">
    <location>
        <position position="178"/>
    </location>
</feature>
<feature type="active site" description="Proton donor" evidence="3">
    <location>
        <position position="201"/>
    </location>
</feature>
<feature type="active site" description="Lowers pKa of active site Tyr" evidence="3">
    <location>
        <position position="205"/>
    </location>
</feature>
<feature type="binding site" evidence="2">
    <location>
        <position position="16"/>
    </location>
    <ligand>
        <name>NADP(+)</name>
        <dbReference type="ChEBI" id="CHEBI:58349"/>
    </ligand>
</feature>
<feature type="binding site" evidence="2">
    <location>
        <position position="39"/>
    </location>
    <ligand>
        <name>NADP(+)</name>
        <dbReference type="ChEBI" id="CHEBI:58349"/>
    </ligand>
</feature>
<feature type="binding site" evidence="2">
    <location>
        <position position="45"/>
    </location>
    <ligand>
        <name>NADP(+)</name>
        <dbReference type="ChEBI" id="CHEBI:58349"/>
    </ligand>
</feature>
<feature type="binding site" evidence="3">
    <location>
        <position position="201"/>
    </location>
    <ligand>
        <name>NADP(+)</name>
        <dbReference type="ChEBI" id="CHEBI:58349"/>
    </ligand>
</feature>
<feature type="binding site" evidence="3">
    <location>
        <position position="205"/>
    </location>
    <ligand>
        <name>NADP(+)</name>
        <dbReference type="ChEBI" id="CHEBI:58349"/>
    </ligand>
</feature>
<feature type="binding site" evidence="2">
    <location>
        <position position="236"/>
    </location>
    <ligand>
        <name>NADP(+)</name>
        <dbReference type="ChEBI" id="CHEBI:58349"/>
    </ligand>
</feature>
<accession>Q6CJC2</accession>
<evidence type="ECO:0000250" key="1"/>
<evidence type="ECO:0000250" key="2">
    <source>
        <dbReference type="UniProtKB" id="L0E2Z4"/>
    </source>
</evidence>
<evidence type="ECO:0000250" key="3">
    <source>
        <dbReference type="UniProtKB" id="O93868"/>
    </source>
</evidence>
<evidence type="ECO:0000305" key="4"/>
<sequence>MSSSKVAVVTGTNSNLGLNIVYRLIERSEPEDNLTIVVTSRTLPRVRECIDLIKAFVNTINRTGSVDYDYLLVDFTNMISILDAHYSLSKRYDHINYFFVNAAQGVYSGIDWLGAVKEVFSSPLEAVTNPTYKIQRVGVKSKDGMGLVFQANVFGPYYLIQKLLPLLQAGQGTVVWVSSIMSAPKYLSLQDIQLLESDVSYEGSKRLVDLLHSATYKEMKKLGIRQYLTHPGIFTSLSFFQYLNVFTYYGMLFLFYLARWIGSPWHNIQGYKAANAPVYVATMANPHFEKEQMKYGSATFRDGLEYIKTDEVDTTGCEDVYKYISNLKLQWDEKLKDQIKPTRIPL</sequence>
<comment type="function">
    <text evidence="1">Responsible for the reduction of the keto group on the C-3 of sterols.</text>
</comment>
<comment type="catalytic activity">
    <reaction>
        <text>a 3beta-hydroxysteroid + NADP(+) = a 3-oxosteroid + NADPH + H(+)</text>
        <dbReference type="Rhea" id="RHEA:34787"/>
        <dbReference type="ChEBI" id="CHEBI:15378"/>
        <dbReference type="ChEBI" id="CHEBI:36836"/>
        <dbReference type="ChEBI" id="CHEBI:47788"/>
        <dbReference type="ChEBI" id="CHEBI:57783"/>
        <dbReference type="ChEBI" id="CHEBI:58349"/>
        <dbReference type="EC" id="1.1.1.270"/>
    </reaction>
</comment>
<comment type="pathway">
    <text>Steroid biosynthesis; zymosterol biosynthesis; zymosterol from lanosterol: step 5/6.</text>
</comment>
<comment type="similarity">
    <text evidence="4">Belongs to the short-chain dehydrogenases/reductases (SDR) family. ERG27 subfamily.</text>
</comment>
<protein>
    <recommendedName>
        <fullName>3-keto-steroid reductase</fullName>
        <ecNumber>1.1.1.270</ecNumber>
    </recommendedName>
</protein>
<name>ERG27_KLULA</name>
<gene>
    <name type="primary">ERG27</name>
    <name type="ordered locus">KLLA0F19756g</name>
</gene>
<dbReference type="EC" id="1.1.1.270"/>
<dbReference type="EMBL" id="CR382126">
    <property type="protein sequence ID" value="CAG98675.1"/>
    <property type="molecule type" value="Genomic_DNA"/>
</dbReference>
<dbReference type="RefSeq" id="XP_455967.1">
    <property type="nucleotide sequence ID" value="XM_455967.1"/>
</dbReference>
<dbReference type="SMR" id="Q6CJC2"/>
<dbReference type="FunCoup" id="Q6CJC2">
    <property type="interactions" value="163"/>
</dbReference>
<dbReference type="STRING" id="284590.Q6CJC2"/>
<dbReference type="PaxDb" id="284590-Q6CJC2"/>
<dbReference type="KEGG" id="kla:KLLA0_F19756g"/>
<dbReference type="eggNOG" id="KOG1478">
    <property type="taxonomic scope" value="Eukaryota"/>
</dbReference>
<dbReference type="HOGENOM" id="CLU_029944_1_0_1"/>
<dbReference type="InParanoid" id="Q6CJC2"/>
<dbReference type="OMA" id="WHNIDGY"/>
<dbReference type="UniPathway" id="UPA00770">
    <property type="reaction ID" value="UER00758"/>
</dbReference>
<dbReference type="Proteomes" id="UP000000598">
    <property type="component" value="Chromosome F"/>
</dbReference>
<dbReference type="GO" id="GO:0005789">
    <property type="term" value="C:endoplasmic reticulum membrane"/>
    <property type="evidence" value="ECO:0007669"/>
    <property type="project" value="TreeGrafter"/>
</dbReference>
<dbReference type="GO" id="GO:0005811">
    <property type="term" value="C:lipid droplet"/>
    <property type="evidence" value="ECO:0007669"/>
    <property type="project" value="TreeGrafter"/>
</dbReference>
<dbReference type="GO" id="GO:0005741">
    <property type="term" value="C:mitochondrial outer membrane"/>
    <property type="evidence" value="ECO:0007669"/>
    <property type="project" value="TreeGrafter"/>
</dbReference>
<dbReference type="GO" id="GO:0000253">
    <property type="term" value="F:3-beta-hydroxysteroid 3-dehydrogenase (NADP+) activity"/>
    <property type="evidence" value="ECO:0007669"/>
    <property type="project" value="UniProtKB-EC"/>
</dbReference>
<dbReference type="GO" id="GO:0006696">
    <property type="term" value="P:ergosterol biosynthetic process"/>
    <property type="evidence" value="ECO:0007669"/>
    <property type="project" value="TreeGrafter"/>
</dbReference>
<dbReference type="FunFam" id="3.40.50.720:FF:000525">
    <property type="entry name" value="3-keto-steroid reductase"/>
    <property type="match status" value="1"/>
</dbReference>
<dbReference type="Gene3D" id="3.40.50.720">
    <property type="entry name" value="NAD(P)-binding Rossmann-like Domain"/>
    <property type="match status" value="1"/>
</dbReference>
<dbReference type="InterPro" id="IPR051593">
    <property type="entry name" value="Ergosterol_Biosynth_ERG27"/>
</dbReference>
<dbReference type="InterPro" id="IPR036291">
    <property type="entry name" value="NAD(P)-bd_dom_sf"/>
</dbReference>
<dbReference type="InterPro" id="IPR002347">
    <property type="entry name" value="SDR_fam"/>
</dbReference>
<dbReference type="PANTHER" id="PTHR43647:SF1">
    <property type="entry name" value="3-KETO-STEROID REDUCTASE ERG27"/>
    <property type="match status" value="1"/>
</dbReference>
<dbReference type="PANTHER" id="PTHR43647">
    <property type="entry name" value="DEHYDROGENASE"/>
    <property type="match status" value="1"/>
</dbReference>
<dbReference type="Pfam" id="PF00106">
    <property type="entry name" value="adh_short"/>
    <property type="match status" value="1"/>
</dbReference>
<dbReference type="SUPFAM" id="SSF51735">
    <property type="entry name" value="NAD(P)-binding Rossmann-fold domains"/>
    <property type="match status" value="1"/>
</dbReference>
<proteinExistence type="inferred from homology"/>
<organism>
    <name type="scientific">Kluyveromyces lactis (strain ATCC 8585 / CBS 2359 / DSM 70799 / NBRC 1267 / NRRL Y-1140 / WM37)</name>
    <name type="common">Yeast</name>
    <name type="synonym">Candida sphaerica</name>
    <dbReference type="NCBI Taxonomy" id="284590"/>
    <lineage>
        <taxon>Eukaryota</taxon>
        <taxon>Fungi</taxon>
        <taxon>Dikarya</taxon>
        <taxon>Ascomycota</taxon>
        <taxon>Saccharomycotina</taxon>
        <taxon>Saccharomycetes</taxon>
        <taxon>Saccharomycetales</taxon>
        <taxon>Saccharomycetaceae</taxon>
        <taxon>Kluyveromyces</taxon>
    </lineage>
</organism>